<dbReference type="EC" id="3.6.5.-" evidence="1"/>
<dbReference type="EMBL" id="D87916">
    <property type="protein sequence ID" value="BAA13501.1"/>
    <property type="molecule type" value="Genomic_DNA"/>
</dbReference>
<dbReference type="SMR" id="P95758"/>
<dbReference type="STRING" id="1911.GCA_001715295_04040"/>
<dbReference type="OMA" id="VVFDWEP"/>
<dbReference type="OrthoDB" id="9807318at2"/>
<dbReference type="GO" id="GO:0005737">
    <property type="term" value="C:cytoplasm"/>
    <property type="evidence" value="ECO:0007669"/>
    <property type="project" value="UniProtKB-SubCell"/>
</dbReference>
<dbReference type="GO" id="GO:0005525">
    <property type="term" value="F:GTP binding"/>
    <property type="evidence" value="ECO:0007669"/>
    <property type="project" value="UniProtKB-UniRule"/>
</dbReference>
<dbReference type="GO" id="GO:0003924">
    <property type="term" value="F:GTPase activity"/>
    <property type="evidence" value="ECO:0007669"/>
    <property type="project" value="UniProtKB-UniRule"/>
</dbReference>
<dbReference type="GO" id="GO:0000287">
    <property type="term" value="F:magnesium ion binding"/>
    <property type="evidence" value="ECO:0007669"/>
    <property type="project" value="InterPro"/>
</dbReference>
<dbReference type="GO" id="GO:0042254">
    <property type="term" value="P:ribosome biogenesis"/>
    <property type="evidence" value="ECO:0007669"/>
    <property type="project" value="UniProtKB-UniRule"/>
</dbReference>
<dbReference type="CDD" id="cd01898">
    <property type="entry name" value="Obg"/>
    <property type="match status" value="1"/>
</dbReference>
<dbReference type="FunFam" id="2.70.210.12:FF:000001">
    <property type="entry name" value="GTPase Obg"/>
    <property type="match status" value="1"/>
</dbReference>
<dbReference type="Gene3D" id="3.30.300.350">
    <property type="entry name" value="GTP-binding protein OBG, C-terminal domain"/>
    <property type="match status" value="1"/>
</dbReference>
<dbReference type="Gene3D" id="2.70.210.12">
    <property type="entry name" value="GTP1/OBG domain"/>
    <property type="match status" value="1"/>
</dbReference>
<dbReference type="Gene3D" id="3.40.50.300">
    <property type="entry name" value="P-loop containing nucleotide triphosphate hydrolases"/>
    <property type="match status" value="1"/>
</dbReference>
<dbReference type="HAMAP" id="MF_01454">
    <property type="entry name" value="GTPase_Obg"/>
    <property type="match status" value="1"/>
</dbReference>
<dbReference type="InterPro" id="IPR031167">
    <property type="entry name" value="G_OBG"/>
</dbReference>
<dbReference type="InterPro" id="IPR006073">
    <property type="entry name" value="GTP-bd"/>
</dbReference>
<dbReference type="InterPro" id="IPR014100">
    <property type="entry name" value="GTP-bd_Obg/CgtA"/>
</dbReference>
<dbReference type="InterPro" id="IPR036346">
    <property type="entry name" value="GTP-bd_prot_GTP1/OBG_C_sf"/>
</dbReference>
<dbReference type="InterPro" id="IPR006074">
    <property type="entry name" value="GTP1-OBG_CS"/>
</dbReference>
<dbReference type="InterPro" id="IPR006169">
    <property type="entry name" value="GTP1_OBG_dom"/>
</dbReference>
<dbReference type="InterPro" id="IPR036726">
    <property type="entry name" value="GTP1_OBG_dom_sf"/>
</dbReference>
<dbReference type="InterPro" id="IPR045086">
    <property type="entry name" value="OBG_GTPase"/>
</dbReference>
<dbReference type="InterPro" id="IPR015349">
    <property type="entry name" value="OCT_dom"/>
</dbReference>
<dbReference type="InterPro" id="IPR027417">
    <property type="entry name" value="P-loop_NTPase"/>
</dbReference>
<dbReference type="NCBIfam" id="TIGR02729">
    <property type="entry name" value="Obg_CgtA"/>
    <property type="match status" value="1"/>
</dbReference>
<dbReference type="NCBIfam" id="TIGR03595">
    <property type="entry name" value="Obg_CgtA_exten"/>
    <property type="match status" value="1"/>
</dbReference>
<dbReference type="NCBIfam" id="NF008954">
    <property type="entry name" value="PRK12296.1"/>
    <property type="match status" value="1"/>
</dbReference>
<dbReference type="NCBIfam" id="NF008955">
    <property type="entry name" value="PRK12297.1"/>
    <property type="match status" value="1"/>
</dbReference>
<dbReference type="NCBIfam" id="NF008956">
    <property type="entry name" value="PRK12299.1"/>
    <property type="match status" value="1"/>
</dbReference>
<dbReference type="PANTHER" id="PTHR11702">
    <property type="entry name" value="DEVELOPMENTALLY REGULATED GTP-BINDING PROTEIN-RELATED"/>
    <property type="match status" value="1"/>
</dbReference>
<dbReference type="PANTHER" id="PTHR11702:SF31">
    <property type="entry name" value="MITOCHONDRIAL RIBOSOME-ASSOCIATED GTPASE 2"/>
    <property type="match status" value="1"/>
</dbReference>
<dbReference type="Pfam" id="PF09269">
    <property type="entry name" value="DUF1967"/>
    <property type="match status" value="1"/>
</dbReference>
<dbReference type="Pfam" id="PF01018">
    <property type="entry name" value="GTP1_OBG"/>
    <property type="match status" value="1"/>
</dbReference>
<dbReference type="Pfam" id="PF01926">
    <property type="entry name" value="MMR_HSR1"/>
    <property type="match status" value="1"/>
</dbReference>
<dbReference type="PRINTS" id="PR00326">
    <property type="entry name" value="GTP1OBG"/>
</dbReference>
<dbReference type="SUPFAM" id="SSF102741">
    <property type="entry name" value="Obg GTP-binding protein C-terminal domain"/>
    <property type="match status" value="1"/>
</dbReference>
<dbReference type="SUPFAM" id="SSF82051">
    <property type="entry name" value="Obg GTP-binding protein N-terminal domain"/>
    <property type="match status" value="1"/>
</dbReference>
<dbReference type="SUPFAM" id="SSF52540">
    <property type="entry name" value="P-loop containing nucleoside triphosphate hydrolases"/>
    <property type="match status" value="1"/>
</dbReference>
<dbReference type="PROSITE" id="PS51710">
    <property type="entry name" value="G_OBG"/>
    <property type="match status" value="1"/>
</dbReference>
<dbReference type="PROSITE" id="PS00905">
    <property type="entry name" value="GTP1_OBG"/>
    <property type="match status" value="1"/>
</dbReference>
<dbReference type="PROSITE" id="PS51883">
    <property type="entry name" value="OBG"/>
    <property type="match status" value="1"/>
</dbReference>
<dbReference type="PROSITE" id="PS51881">
    <property type="entry name" value="OCT"/>
    <property type="match status" value="1"/>
</dbReference>
<proteinExistence type="evidence at protein level"/>
<accession>P95758</accession>
<evidence type="ECO:0000255" key="1">
    <source>
        <dbReference type="HAMAP-Rule" id="MF_01454"/>
    </source>
</evidence>
<evidence type="ECO:0000255" key="2">
    <source>
        <dbReference type="PROSITE-ProRule" id="PRU01229"/>
    </source>
</evidence>
<evidence type="ECO:0000255" key="3">
    <source>
        <dbReference type="PROSITE-ProRule" id="PRU01231"/>
    </source>
</evidence>
<evidence type="ECO:0000256" key="4">
    <source>
        <dbReference type="SAM" id="MobiDB-lite"/>
    </source>
</evidence>
<reference key="1">
    <citation type="journal article" date="1997" name="J. Bacteriol.">
        <title>Molecular cloning and characterization of the obg gene of Streptomyces griseus in relation to the onset of morphological differentiation.</title>
        <authorList>
            <person name="Okamoto S."/>
            <person name="Itoh M."/>
            <person name="Ochi K."/>
        </authorList>
    </citation>
    <scope>NUCLEOTIDE SEQUENCE [GENOMIC DNA]</scope>
    <scope>POSSIBLE FUNCTION IN SPORULATION</scope>
    <scope>GTP-BINDING</scope>
    <scope>OVEREXPRESSION</scope>
    <source>
        <strain>ATCC 11984 / NBRC 13189 / SL-842</strain>
    </source>
</reference>
<reference key="2">
    <citation type="journal article" date="2005" name="Dev. Cell">
        <title>Obg/CtgA, a signaling protein that controls replication, translation, and morphological development?</title>
        <authorList>
            <person name="Michel B."/>
        </authorList>
    </citation>
    <scope>REVIEW</scope>
</reference>
<comment type="function">
    <text>Overexpression suppresses sporulation although cell growth rate was not reduced. Impaired differentiation was eliminated by addition of decoyinine, an inhibitor of GMP synthesis. Overexpression has no effect on streptomycin production.</text>
</comment>
<comment type="function">
    <text evidence="1">An essential GTPase which binds GTP, GDP and possibly (p)ppGpp with moderate affinity, with high nucleotide exchange rates and a fairly low GTP hydrolysis rate. Plays a role in control of the cell cycle, stress response, ribosome biogenesis and in those bacteria that undergo differentiation, in morphogenesis control.</text>
</comment>
<comment type="cofactor">
    <cofactor evidence="1">
        <name>Mg(2+)</name>
        <dbReference type="ChEBI" id="CHEBI:18420"/>
    </cofactor>
</comment>
<comment type="subunit">
    <text evidence="1">Monomer.</text>
</comment>
<comment type="subcellular location">
    <subcellularLocation>
        <location evidence="1">Cytoplasm</location>
    </subcellularLocation>
</comment>
<comment type="similarity">
    <text evidence="1">Belongs to the TRAFAC class OBG-HflX-like GTPase superfamily. OBG GTPase family.</text>
</comment>
<gene>
    <name evidence="1" type="primary">obg</name>
</gene>
<feature type="chain" id="PRO_0000386324" description="GTPase Obg">
    <location>
        <begin position="1"/>
        <end position="478"/>
    </location>
</feature>
<feature type="domain" description="Obg" evidence="3">
    <location>
        <begin position="2"/>
        <end position="159"/>
    </location>
</feature>
<feature type="domain" description="OBG-type G" evidence="1">
    <location>
        <begin position="160"/>
        <end position="330"/>
    </location>
</feature>
<feature type="domain" description="OCT" evidence="2">
    <location>
        <begin position="348"/>
        <end position="430"/>
    </location>
</feature>
<feature type="region of interest" description="Disordered" evidence="4">
    <location>
        <begin position="61"/>
        <end position="87"/>
    </location>
</feature>
<feature type="region of interest" description="Disordered" evidence="4">
    <location>
        <begin position="436"/>
        <end position="478"/>
    </location>
</feature>
<feature type="compositionally biased region" description="Basic and acidic residues" evidence="4">
    <location>
        <begin position="439"/>
        <end position="468"/>
    </location>
</feature>
<feature type="compositionally biased region" description="Acidic residues" evidence="4">
    <location>
        <begin position="469"/>
        <end position="478"/>
    </location>
</feature>
<feature type="binding site" evidence="1">
    <location>
        <begin position="166"/>
        <end position="173"/>
    </location>
    <ligand>
        <name>GTP</name>
        <dbReference type="ChEBI" id="CHEBI:37565"/>
    </ligand>
</feature>
<feature type="binding site" evidence="1">
    <location>
        <position position="173"/>
    </location>
    <ligand>
        <name>Mg(2+)</name>
        <dbReference type="ChEBI" id="CHEBI:18420"/>
    </ligand>
</feature>
<feature type="binding site" evidence="1">
    <location>
        <begin position="191"/>
        <end position="195"/>
    </location>
    <ligand>
        <name>GTP</name>
        <dbReference type="ChEBI" id="CHEBI:37565"/>
    </ligand>
</feature>
<feature type="binding site" evidence="1">
    <location>
        <position position="193"/>
    </location>
    <ligand>
        <name>Mg(2+)</name>
        <dbReference type="ChEBI" id="CHEBI:18420"/>
    </ligand>
</feature>
<feature type="binding site" evidence="1">
    <location>
        <begin position="212"/>
        <end position="215"/>
    </location>
    <ligand>
        <name>GTP</name>
        <dbReference type="ChEBI" id="CHEBI:37565"/>
    </ligand>
</feature>
<feature type="binding site" evidence="1">
    <location>
        <begin position="282"/>
        <end position="285"/>
    </location>
    <ligand>
        <name>GTP</name>
        <dbReference type="ChEBI" id="CHEBI:37565"/>
    </ligand>
</feature>
<feature type="binding site" evidence="1">
    <location>
        <begin position="311"/>
        <end position="313"/>
    </location>
    <ligand>
        <name>GTP</name>
        <dbReference type="ChEBI" id="CHEBI:37565"/>
    </ligand>
</feature>
<keyword id="KW-0963">Cytoplasm</keyword>
<keyword id="KW-0342">GTP-binding</keyword>
<keyword id="KW-0378">Hydrolase</keyword>
<keyword id="KW-0460">Magnesium</keyword>
<keyword id="KW-0479">Metal-binding</keyword>
<keyword id="KW-0547">Nucleotide-binding</keyword>
<protein>
    <recommendedName>
        <fullName evidence="1">GTPase Obg</fullName>
        <ecNumber evidence="1">3.6.5.-</ecNumber>
    </recommendedName>
    <alternativeName>
        <fullName evidence="1">GTP-binding protein Obg</fullName>
    </alternativeName>
</protein>
<sequence>MTTFVDRVELHAAAGNGGHGCASVHREKFKPLGGPDGGNGGRGGDVILVVEQSVTTLLDYHHSPHRKATNGQPGAGDNRSGKDGQDLVLPVPDGTVVLDKAGNVLADLVGQGTTFVAGQGGRGGLGNAALASARRKAPGFALLGEPGESRDIVLELKTVADVALVGYPSAGKSSLISVLSAAKPKIADYPFTTLVPNLGVVTAGSTVYTIADVPGLIPGASQGKGLGLEFLRHVERCSVLVHVLDTATLESDRDPVSDLDMIEEELRLYGGLENRPRIVALNKVDIPDGQDLADMIRPDLEARGYRVFEVSAIAHKGLKELSFALAGIIAEARATKPKEEATRIVIRPRAVDDAGFTVTLEDDGIYRVRGEKPERWVRQTDFNNDEAVGYLADRLNRLGVEDSLMKAGARAGDGVAIGPEENAVVFDWEPTVTAGAEMLGRRGEDHRLEEPRPAAQRRRERDAERDDAEKEYDEFDPF</sequence>
<organism>
    <name type="scientific">Streptomyces griseus</name>
    <dbReference type="NCBI Taxonomy" id="1911"/>
    <lineage>
        <taxon>Bacteria</taxon>
        <taxon>Bacillati</taxon>
        <taxon>Actinomycetota</taxon>
        <taxon>Actinomycetes</taxon>
        <taxon>Kitasatosporales</taxon>
        <taxon>Streptomycetaceae</taxon>
        <taxon>Streptomyces</taxon>
    </lineage>
</organism>
<name>OBG_STRGR</name>